<feature type="peptide" id="PRO_0000378699" description="Pyrokinin-5" evidence="3">
    <location>
        <begin position="1"/>
        <end position="17"/>
    </location>
</feature>
<feature type="modified residue" description="Leucine amide" evidence="3">
    <location>
        <position position="17"/>
    </location>
</feature>
<accession>P85796</accession>
<organism>
    <name type="scientific">Hostilia carinata</name>
    <name type="common">Cockroach</name>
    <dbReference type="NCBI Taxonomy" id="645593"/>
    <lineage>
        <taxon>Eukaryota</taxon>
        <taxon>Metazoa</taxon>
        <taxon>Ecdysozoa</taxon>
        <taxon>Arthropoda</taxon>
        <taxon>Hexapoda</taxon>
        <taxon>Insecta</taxon>
        <taxon>Pterygota</taxon>
        <taxon>Neoptera</taxon>
        <taxon>Polyneoptera</taxon>
        <taxon>Dictyoptera</taxon>
        <taxon>Blattodea</taxon>
        <taxon>Blaberoidea</taxon>
        <taxon>Blaberidae</taxon>
        <taxon>Perisphaerinae</taxon>
        <taxon>Hostilia</taxon>
    </lineage>
</organism>
<proteinExistence type="evidence at protein level"/>
<protein>
    <recommendedName>
        <fullName evidence="1">Pyrokinin-5</fullName>
    </recommendedName>
    <alternativeName>
        <fullName evidence="1">FXPRL-amide</fullName>
    </alternativeName>
    <alternativeName>
        <fullName evidence="4">HosCa-Capa-PK</fullName>
    </alternativeName>
</protein>
<sequence>SGETSGEGNGMWFGPRL</sequence>
<keyword id="KW-0027">Amidation</keyword>
<keyword id="KW-0903">Direct protein sequencing</keyword>
<keyword id="KW-0527">Neuropeptide</keyword>
<keyword id="KW-0964">Secreted</keyword>
<reference evidence="5" key="1">
    <citation type="journal article" date="2009" name="BMC Evol. Biol.">
        <title>A proteomic approach for studying insect phylogeny: CAPA peptides of ancient insect taxa (Dictyoptera, Blattoptera) as a test case.</title>
        <authorList>
            <person name="Roth S."/>
            <person name="Fromm B."/>
            <person name="Gaede G."/>
            <person name="Predel R."/>
        </authorList>
    </citation>
    <scope>PROTEIN SEQUENCE</scope>
    <scope>AMIDATION AT LEU-17</scope>
    <source>
        <tissue evidence="3">Abdominal perisympathetic organs</tissue>
    </source>
</reference>
<name>PPK5_HOSCA</name>
<evidence type="ECO:0000250" key="1">
    <source>
        <dbReference type="UniProtKB" id="P82617"/>
    </source>
</evidence>
<evidence type="ECO:0000255" key="2"/>
<evidence type="ECO:0000269" key="3">
    <source>
    </source>
</evidence>
<evidence type="ECO:0000303" key="4">
    <source>
    </source>
</evidence>
<evidence type="ECO:0000305" key="5"/>
<dbReference type="GO" id="GO:0005576">
    <property type="term" value="C:extracellular region"/>
    <property type="evidence" value="ECO:0007669"/>
    <property type="project" value="UniProtKB-SubCell"/>
</dbReference>
<dbReference type="GO" id="GO:0005184">
    <property type="term" value="F:neuropeptide hormone activity"/>
    <property type="evidence" value="ECO:0007669"/>
    <property type="project" value="InterPro"/>
</dbReference>
<dbReference type="GO" id="GO:0007218">
    <property type="term" value="P:neuropeptide signaling pathway"/>
    <property type="evidence" value="ECO:0007669"/>
    <property type="project" value="UniProtKB-KW"/>
</dbReference>
<dbReference type="InterPro" id="IPR001484">
    <property type="entry name" value="Pyrokinin_CS"/>
</dbReference>
<dbReference type="PROSITE" id="PS00539">
    <property type="entry name" value="PYROKININ"/>
    <property type="match status" value="1"/>
</dbReference>
<comment type="function">
    <text evidence="1">Myoactive.</text>
</comment>
<comment type="subcellular location">
    <subcellularLocation>
        <location evidence="5">Secreted</location>
    </subcellularLocation>
</comment>
<comment type="similarity">
    <text evidence="2">Belongs to the pyrokinin family.</text>
</comment>